<feature type="chain" id="PRO_0000184551" description="S-methyl-5'-thioinosine phosphorylase">
    <location>
        <begin position="1"/>
        <end position="245"/>
    </location>
</feature>
<feature type="binding site" evidence="1">
    <location>
        <position position="10"/>
    </location>
    <ligand>
        <name>phosphate</name>
        <dbReference type="ChEBI" id="CHEBI:43474"/>
    </ligand>
</feature>
<feature type="binding site" evidence="1">
    <location>
        <begin position="52"/>
        <end position="53"/>
    </location>
    <ligand>
        <name>phosphate</name>
        <dbReference type="ChEBI" id="CHEBI:43474"/>
    </ligand>
</feature>
<feature type="binding site" evidence="1">
    <location>
        <position position="185"/>
    </location>
    <ligand>
        <name>substrate</name>
    </ligand>
</feature>
<feature type="binding site" evidence="1">
    <location>
        <position position="186"/>
    </location>
    <ligand>
        <name>phosphate</name>
        <dbReference type="ChEBI" id="CHEBI:43474"/>
    </ligand>
</feature>
<feature type="binding site">
    <location>
        <begin position="209"/>
        <end position="211"/>
    </location>
    <ligand>
        <name>substrate</name>
    </ligand>
</feature>
<feature type="site" description="Important for substrate specificity">
    <location>
        <position position="167"/>
    </location>
</feature>
<feature type="site" description="Important for substrate specificity" evidence="1">
    <location>
        <position position="221"/>
    </location>
</feature>
<feature type="strand" evidence="3">
    <location>
        <begin position="4"/>
        <end position="8"/>
    </location>
</feature>
<feature type="strand" evidence="3">
    <location>
        <begin position="37"/>
        <end position="42"/>
    </location>
</feature>
<feature type="strand" evidence="3">
    <location>
        <begin position="45"/>
        <end position="53"/>
    </location>
</feature>
<feature type="helix" evidence="3">
    <location>
        <begin position="61"/>
        <end position="63"/>
    </location>
</feature>
<feature type="helix" evidence="3">
    <location>
        <begin position="66"/>
        <end position="76"/>
    </location>
</feature>
<feature type="strand" evidence="3">
    <location>
        <begin position="79"/>
        <end position="89"/>
    </location>
</feature>
<feature type="strand" evidence="3">
    <location>
        <begin position="103"/>
        <end position="107"/>
    </location>
</feature>
<feature type="strand" evidence="3">
    <location>
        <begin position="116"/>
        <end position="120"/>
    </location>
</feature>
<feature type="helix" evidence="3">
    <location>
        <begin position="135"/>
        <end position="147"/>
    </location>
</feature>
<feature type="strand" evidence="3">
    <location>
        <begin position="152"/>
        <end position="154"/>
    </location>
</feature>
<feature type="strand" evidence="3">
    <location>
        <begin position="157"/>
        <end position="160"/>
    </location>
</feature>
<feature type="helix" evidence="3">
    <location>
        <begin position="169"/>
        <end position="177"/>
    </location>
</feature>
<feature type="strand" evidence="3">
    <location>
        <begin position="181"/>
        <end position="187"/>
    </location>
</feature>
<feature type="helix" evidence="3">
    <location>
        <begin position="190"/>
        <end position="196"/>
    </location>
</feature>
<feature type="strand" evidence="3">
    <location>
        <begin position="201"/>
        <end position="210"/>
    </location>
</feature>
<feature type="turn" evidence="3">
    <location>
        <begin position="212"/>
        <end position="214"/>
    </location>
</feature>
<feature type="strand" evidence="3">
    <location>
        <begin position="215"/>
        <end position="217"/>
    </location>
</feature>
<feature type="helix" evidence="3">
    <location>
        <begin position="221"/>
        <end position="243"/>
    </location>
</feature>
<evidence type="ECO:0000255" key="1">
    <source>
        <dbReference type="HAMAP-Rule" id="MF_01963"/>
    </source>
</evidence>
<evidence type="ECO:0000269" key="2">
    <source>
    </source>
</evidence>
<evidence type="ECO:0007829" key="3">
    <source>
        <dbReference type="PDB" id="3OZB"/>
    </source>
</evidence>
<proteinExistence type="evidence at protein level"/>
<dbReference type="EC" id="2.4.2.44" evidence="1"/>
<dbReference type="EMBL" id="AE004091">
    <property type="protein sequence ID" value="AAG06392.1"/>
    <property type="molecule type" value="Genomic_DNA"/>
</dbReference>
<dbReference type="PIR" id="F83270">
    <property type="entry name" value="F83270"/>
</dbReference>
<dbReference type="RefSeq" id="NP_251694.1">
    <property type="nucleotide sequence ID" value="NC_002516.2"/>
</dbReference>
<dbReference type="RefSeq" id="WP_003091193.1">
    <property type="nucleotide sequence ID" value="NZ_QZGE01000009.1"/>
</dbReference>
<dbReference type="PDB" id="3OZB">
    <property type="method" value="X-ray"/>
    <property type="resolution" value="2.80 A"/>
    <property type="chains" value="A/B/C/D/E/F=1-245"/>
</dbReference>
<dbReference type="PDBsum" id="3OZB"/>
<dbReference type="SMR" id="Q9HZK1"/>
<dbReference type="FunCoup" id="Q9HZK1">
    <property type="interactions" value="664"/>
</dbReference>
<dbReference type="STRING" id="208964.PA3004"/>
<dbReference type="BindingDB" id="Q9HZK1"/>
<dbReference type="ChEMBL" id="CHEMBL3988593"/>
<dbReference type="PaxDb" id="208964-PA3004"/>
<dbReference type="GeneID" id="880215"/>
<dbReference type="KEGG" id="pae:PA3004"/>
<dbReference type="PATRIC" id="fig|208964.12.peg.3152"/>
<dbReference type="PseudoCAP" id="PA3004"/>
<dbReference type="HOGENOM" id="CLU_054456_0_2_6"/>
<dbReference type="InParanoid" id="Q9HZK1"/>
<dbReference type="OrthoDB" id="1523230at2"/>
<dbReference type="PhylomeDB" id="Q9HZK1"/>
<dbReference type="BioCyc" id="MetaCyc:MONOMER-16355"/>
<dbReference type="BioCyc" id="PAER208964:G1FZ6-3056-MONOMER"/>
<dbReference type="BRENDA" id="2.4.2.44">
    <property type="organism ID" value="5087"/>
</dbReference>
<dbReference type="SABIO-RK" id="Q9HZK1"/>
<dbReference type="UniPathway" id="UPA00606"/>
<dbReference type="EvolutionaryTrace" id="Q9HZK1"/>
<dbReference type="Proteomes" id="UP000002438">
    <property type="component" value="Chromosome"/>
</dbReference>
<dbReference type="GO" id="GO:0005829">
    <property type="term" value="C:cytosol"/>
    <property type="evidence" value="ECO:0000318"/>
    <property type="project" value="GO_Central"/>
</dbReference>
<dbReference type="GO" id="GO:0017061">
    <property type="term" value="F:S-methyl-5-thioadenosine phosphorylase activity"/>
    <property type="evidence" value="ECO:0000318"/>
    <property type="project" value="GO_Central"/>
</dbReference>
<dbReference type="GO" id="GO:0019509">
    <property type="term" value="P:L-methionine salvage from methylthioadenosine"/>
    <property type="evidence" value="ECO:0000318"/>
    <property type="project" value="GO_Central"/>
</dbReference>
<dbReference type="GO" id="GO:0006166">
    <property type="term" value="P:purine ribonucleoside salvage"/>
    <property type="evidence" value="ECO:0007669"/>
    <property type="project" value="UniProtKB-UniRule"/>
</dbReference>
<dbReference type="CDD" id="cd09010">
    <property type="entry name" value="MTAP_SsMTAPII_like_MTIP"/>
    <property type="match status" value="1"/>
</dbReference>
<dbReference type="Gene3D" id="3.40.50.1580">
    <property type="entry name" value="Nucleoside phosphorylase domain"/>
    <property type="match status" value="1"/>
</dbReference>
<dbReference type="HAMAP" id="MF_01963">
    <property type="entry name" value="MTAP"/>
    <property type="match status" value="1"/>
</dbReference>
<dbReference type="InterPro" id="IPR010044">
    <property type="entry name" value="MTAP"/>
</dbReference>
<dbReference type="InterPro" id="IPR000845">
    <property type="entry name" value="Nucleoside_phosphorylase_d"/>
</dbReference>
<dbReference type="InterPro" id="IPR035994">
    <property type="entry name" value="Nucleoside_phosphorylase_sf"/>
</dbReference>
<dbReference type="InterPro" id="IPR018099">
    <property type="entry name" value="Purine_phosphorylase-2_CS"/>
</dbReference>
<dbReference type="NCBIfam" id="TIGR01694">
    <property type="entry name" value="MTAP"/>
    <property type="match status" value="1"/>
</dbReference>
<dbReference type="NCBIfam" id="NF006599">
    <property type="entry name" value="PRK09136.1"/>
    <property type="match status" value="1"/>
</dbReference>
<dbReference type="PANTHER" id="PTHR42679">
    <property type="entry name" value="S-METHYL-5'-THIOADENOSINE PHOSPHORYLASE"/>
    <property type="match status" value="1"/>
</dbReference>
<dbReference type="PANTHER" id="PTHR42679:SF2">
    <property type="entry name" value="S-METHYL-5'-THIOADENOSINE PHOSPHORYLASE"/>
    <property type="match status" value="1"/>
</dbReference>
<dbReference type="Pfam" id="PF01048">
    <property type="entry name" value="PNP_UDP_1"/>
    <property type="match status" value="1"/>
</dbReference>
<dbReference type="SUPFAM" id="SSF53167">
    <property type="entry name" value="Purine and uridine phosphorylases"/>
    <property type="match status" value="1"/>
</dbReference>
<dbReference type="PROSITE" id="PS01240">
    <property type="entry name" value="PNP_MTAP_2"/>
    <property type="match status" value="1"/>
</dbReference>
<comment type="function">
    <text evidence="1 2">Catalyzes the reversible phosphorylation of S-methyl-5'-thioinosine (MTI) to hypoxanthine and 5-methylthioribose-1-phosphate. Involved in the breakdown of S-methyl-5'-thioadenosine (MTA), a major by-product of polyamine biosynthesis. Catabolism of (MTA) occurs via deamination to MTI and phosphorolysis to hypoxanthine. Involved in quorum sensing.</text>
</comment>
<comment type="catalytic activity">
    <reaction evidence="1">
        <text>S-methyl-5'-thioinosine + phosphate = 5-(methylsulfanyl)-alpha-D-ribose 1-phosphate + hypoxanthine</text>
        <dbReference type="Rhea" id="RHEA:30643"/>
        <dbReference type="ChEBI" id="CHEBI:17368"/>
        <dbReference type="ChEBI" id="CHEBI:43474"/>
        <dbReference type="ChEBI" id="CHEBI:48595"/>
        <dbReference type="ChEBI" id="CHEBI:58533"/>
        <dbReference type="EC" id="2.4.2.44"/>
    </reaction>
</comment>
<comment type="biophysicochemical properties">
    <kinetics>
        <KM evidence="2">2.6 uM for S-methyl-5'-thioinosine</KM>
        <KM evidence="2">23 uM for inosine</KM>
        <KM evidence="2">90 uM for adenosine</KM>
    </kinetics>
</comment>
<comment type="pathway">
    <text evidence="1">Purine metabolism; purine nucleoside salvage.</text>
</comment>
<comment type="subunit">
    <text evidence="1 2">Homotrimer.</text>
</comment>
<comment type="miscellaneous">
    <text evidence="1">Although this enzyme belongs to the family of MTA phosphorylases based on sequence homology, it has been shown that conserved amino acid substitutions in the substrate binding pocket convert the substrate specificity of this enzyme from 6-aminopurines to 6-oxopurines.</text>
</comment>
<comment type="similarity">
    <text evidence="1">Belongs to the PNP/MTAP phosphorylase family. MTAP subfamily.</text>
</comment>
<gene>
    <name type="ordered locus">PA3004</name>
</gene>
<reference key="1">
    <citation type="journal article" date="2000" name="Nature">
        <title>Complete genome sequence of Pseudomonas aeruginosa PAO1, an opportunistic pathogen.</title>
        <authorList>
            <person name="Stover C.K."/>
            <person name="Pham X.-Q.T."/>
            <person name="Erwin A.L."/>
            <person name="Mizoguchi S.D."/>
            <person name="Warrener P."/>
            <person name="Hickey M.J."/>
            <person name="Brinkman F.S.L."/>
            <person name="Hufnagle W.O."/>
            <person name="Kowalik D.J."/>
            <person name="Lagrou M."/>
            <person name="Garber R.L."/>
            <person name="Goltry L."/>
            <person name="Tolentino E."/>
            <person name="Westbrock-Wadman S."/>
            <person name="Yuan Y."/>
            <person name="Brody L.L."/>
            <person name="Coulter S.N."/>
            <person name="Folger K.R."/>
            <person name="Kas A."/>
            <person name="Larbig K."/>
            <person name="Lim R.M."/>
            <person name="Smith K.A."/>
            <person name="Spencer D.H."/>
            <person name="Wong G.K.-S."/>
            <person name="Wu Z."/>
            <person name="Paulsen I.T."/>
            <person name="Reizer J."/>
            <person name="Saier M.H. Jr."/>
            <person name="Hancock R.E.W."/>
            <person name="Lory S."/>
            <person name="Olson M.V."/>
        </authorList>
    </citation>
    <scope>NUCLEOTIDE SEQUENCE [LARGE SCALE GENOMIC DNA]</scope>
    <source>
        <strain>ATCC 15692 / DSM 22644 / CIP 104116 / JCM 14847 / LMG 12228 / 1C / PRS 101 / PAO1</strain>
    </source>
</reference>
<reference key="2">
    <citation type="journal article" date="2011" name="Biochemistry">
        <title>Methylthioinosine phosphorylase from Pseudomonas aeruginosa. Structure and annotation of a novel enzyme in quorum sensing.</title>
        <authorList>
            <person name="Guan R."/>
            <person name="Ho M.-C."/>
            <person name="Almo S.C."/>
            <person name="Schramm V.L."/>
        </authorList>
    </citation>
    <scope>X-RAY CRYSTALLOGRAPHY (2.8 ANGSTROMS) IN COMPLEX WITH SUBSTRATE</scope>
    <scope>FUNCTION</scope>
    <scope>BIOPHYSICOCHEMICAL PROPERTIES</scope>
    <scope>SUBUNIT</scope>
</reference>
<protein>
    <recommendedName>
        <fullName>S-methyl-5'-thioinosine phosphorylase</fullName>
        <ecNumber evidence="1">2.4.2.44</ecNumber>
    </recommendedName>
    <alternativeName>
        <fullName evidence="1">5'-methylthioinosine phosphorylase</fullName>
        <shortName evidence="1">MTI phosphorylase</shortName>
        <shortName evidence="1">MTIP</shortName>
    </alternativeName>
</protein>
<organism>
    <name type="scientific">Pseudomonas aeruginosa (strain ATCC 15692 / DSM 22644 / CIP 104116 / JCM 14847 / LMG 12228 / 1C / PRS 101 / PAO1)</name>
    <dbReference type="NCBI Taxonomy" id="208964"/>
    <lineage>
        <taxon>Bacteria</taxon>
        <taxon>Pseudomonadati</taxon>
        <taxon>Pseudomonadota</taxon>
        <taxon>Gammaproteobacteria</taxon>
        <taxon>Pseudomonadales</taxon>
        <taxon>Pseudomonadaceae</taxon>
        <taxon>Pseudomonas</taxon>
    </lineage>
</organism>
<accession>Q9HZK1</accession>
<sequence length="245" mass="26266">MSVYAIIGGTGLTQLEGLTLSESLPIETPYGAPSAPLQRGRYAGREVLFLARHGHPHRFPPHQVNYRANLWALKQAGAEAVIAVNAVGGIHAAMGTGHLCVPHQLIDYTSGREHTYFAGDIEHVTHIDFSHPYDEPLRQRLIEALRALGLAHSSHGVYACTQGPRLETVAEIARLERDGNDIVGMTGMPEAALARELDLPYACLALVVNPAAGKSAGIITMAEIEQALHDGIGKVREVLARVLAG</sequence>
<name>MTIP_PSEAE</name>
<keyword id="KW-0002">3D-structure</keyword>
<keyword id="KW-0328">Glycosyltransferase</keyword>
<keyword id="KW-0660">Purine salvage</keyword>
<keyword id="KW-1185">Reference proteome</keyword>
<keyword id="KW-0808">Transferase</keyword>